<evidence type="ECO:0000255" key="1">
    <source>
        <dbReference type="HAMAP-Rule" id="MF_00707"/>
    </source>
</evidence>
<gene>
    <name type="ordered locus">CKL_0858</name>
</gene>
<accession>A5N6H8</accession>
<name>Y858_CLOK5</name>
<protein>
    <recommendedName>
        <fullName evidence="1">UPF0735 ACT domain-containing protein CKL_0858</fullName>
    </recommendedName>
</protein>
<comment type="similarity">
    <text evidence="1">Belongs to the UPF0735 family.</text>
</comment>
<organism>
    <name type="scientific">Clostridium kluyveri (strain ATCC 8527 / DSM 555 / NBRC 12016 / NCIMB 10680 / K1)</name>
    <dbReference type="NCBI Taxonomy" id="431943"/>
    <lineage>
        <taxon>Bacteria</taxon>
        <taxon>Bacillati</taxon>
        <taxon>Bacillota</taxon>
        <taxon>Clostridia</taxon>
        <taxon>Eubacteriales</taxon>
        <taxon>Clostridiaceae</taxon>
        <taxon>Clostridium</taxon>
    </lineage>
</organism>
<sequence>MKNKFLIIDTSILPDVFDKVVKVKELLRTGHVKDISEGVKQVGISRSTYYKYRDSVFTLSESVAGHKITLGLTLAHKAGTLSKILDNIAQKKGNILTINQDIPINNAANVSITFDASQLEVEVNELMEDIRTLKSVIKVNLAAVE</sequence>
<dbReference type="EMBL" id="CP000673">
    <property type="protein sequence ID" value="EDK32909.1"/>
    <property type="molecule type" value="Genomic_DNA"/>
</dbReference>
<dbReference type="RefSeq" id="WP_011989420.1">
    <property type="nucleotide sequence ID" value="NC_009706.1"/>
</dbReference>
<dbReference type="STRING" id="431943.CKL_0858"/>
<dbReference type="KEGG" id="ckl:CKL_0858"/>
<dbReference type="eggNOG" id="COG4492">
    <property type="taxonomic scope" value="Bacteria"/>
</dbReference>
<dbReference type="HOGENOM" id="CLU_128147_0_0_9"/>
<dbReference type="Proteomes" id="UP000002411">
    <property type="component" value="Chromosome"/>
</dbReference>
<dbReference type="CDD" id="cd04888">
    <property type="entry name" value="ACT_PheB-BS"/>
    <property type="match status" value="1"/>
</dbReference>
<dbReference type="Gene3D" id="3.30.70.260">
    <property type="match status" value="1"/>
</dbReference>
<dbReference type="HAMAP" id="MF_00707">
    <property type="entry name" value="UPF0735"/>
    <property type="match status" value="1"/>
</dbReference>
<dbReference type="InterPro" id="IPR045865">
    <property type="entry name" value="ACT-like_dom_sf"/>
</dbReference>
<dbReference type="InterPro" id="IPR002912">
    <property type="entry name" value="ACT_dom"/>
</dbReference>
<dbReference type="InterPro" id="IPR008310">
    <property type="entry name" value="UPF0735_ACT_dom-cont"/>
</dbReference>
<dbReference type="NCBIfam" id="NF003361">
    <property type="entry name" value="PRK04435.1"/>
    <property type="match status" value="1"/>
</dbReference>
<dbReference type="PIRSF" id="PIRSF025624">
    <property type="entry name" value="ACT_PheB"/>
    <property type="match status" value="1"/>
</dbReference>
<dbReference type="SUPFAM" id="SSF55021">
    <property type="entry name" value="ACT-like"/>
    <property type="match status" value="1"/>
</dbReference>
<dbReference type="PROSITE" id="PS51671">
    <property type="entry name" value="ACT"/>
    <property type="match status" value="1"/>
</dbReference>
<keyword id="KW-1185">Reference proteome</keyword>
<proteinExistence type="inferred from homology"/>
<reference key="1">
    <citation type="journal article" date="2008" name="Proc. Natl. Acad. Sci. U.S.A.">
        <title>The genome of Clostridium kluyveri, a strict anaerobe with unique metabolic features.</title>
        <authorList>
            <person name="Seedorf H."/>
            <person name="Fricke W.F."/>
            <person name="Veith B."/>
            <person name="Brueggemann H."/>
            <person name="Liesegang H."/>
            <person name="Strittmatter A."/>
            <person name="Miethke M."/>
            <person name="Buckel W."/>
            <person name="Hinderberger J."/>
            <person name="Li F."/>
            <person name="Hagemeier C."/>
            <person name="Thauer R.K."/>
            <person name="Gottschalk G."/>
        </authorList>
    </citation>
    <scope>NUCLEOTIDE SEQUENCE [LARGE SCALE GENOMIC DNA]</scope>
    <source>
        <strain>ATCC 8527 / DSM 555 / NBRC 12016 / NCIMB 10680 / K1</strain>
    </source>
</reference>
<feature type="chain" id="PRO_0000366305" description="UPF0735 ACT domain-containing protein CKL_0858">
    <location>
        <begin position="1"/>
        <end position="145"/>
    </location>
</feature>
<feature type="domain" description="ACT" evidence="1">
    <location>
        <begin position="69"/>
        <end position="144"/>
    </location>
</feature>